<sequence>MSAPMIGMVVLVVVLGLAVLALSYRLWKLRQGGTAGIMRDIPAVGGHGWRHGVIRYRGGEAAFYRLSSLRLWPDRRLSRRGVEIISRRAPRGDEFDIMTDEIVVVELCDSTQDRRVGYEIALDRGALTAFLSWLESRPSPRARRRSM</sequence>
<reference key="1">
    <citation type="journal article" date="1998" name="Nature">
        <title>Deciphering the biology of Mycobacterium tuberculosis from the complete genome sequence.</title>
        <authorList>
            <person name="Cole S.T."/>
            <person name="Brosch R."/>
            <person name="Parkhill J."/>
            <person name="Garnier T."/>
            <person name="Churcher C.M."/>
            <person name="Harris D.E."/>
            <person name="Gordon S.V."/>
            <person name="Eiglmeier K."/>
            <person name="Gas S."/>
            <person name="Barry C.E. III"/>
            <person name="Tekaia F."/>
            <person name="Badcock K."/>
            <person name="Basham D."/>
            <person name="Brown D."/>
            <person name="Chillingworth T."/>
            <person name="Connor R."/>
            <person name="Davies R.M."/>
            <person name="Devlin K."/>
            <person name="Feltwell T."/>
            <person name="Gentles S."/>
            <person name="Hamlin N."/>
            <person name="Holroyd S."/>
            <person name="Hornsby T."/>
            <person name="Jagels K."/>
            <person name="Krogh A."/>
            <person name="McLean J."/>
            <person name="Moule S."/>
            <person name="Murphy L.D."/>
            <person name="Oliver S."/>
            <person name="Osborne J."/>
            <person name="Quail M.A."/>
            <person name="Rajandream M.A."/>
            <person name="Rogers J."/>
            <person name="Rutter S."/>
            <person name="Seeger K."/>
            <person name="Skelton S."/>
            <person name="Squares S."/>
            <person name="Squares R."/>
            <person name="Sulston J.E."/>
            <person name="Taylor K."/>
            <person name="Whitehead S."/>
            <person name="Barrell B.G."/>
        </authorList>
    </citation>
    <scope>NUCLEOTIDE SEQUENCE [LARGE SCALE GENOMIC DNA]</scope>
    <source>
        <strain>ATCC 25618 / H37Rv</strain>
    </source>
</reference>
<reference key="2">
    <citation type="journal article" date="2011" name="Mol. Cell. Proteomics">
        <title>Proteogenomic analysis of Mycobacterium tuberculosis by high resolution mass spectrometry.</title>
        <authorList>
            <person name="Kelkar D.S."/>
            <person name="Kumar D."/>
            <person name="Kumar P."/>
            <person name="Balakrishnan L."/>
            <person name="Muthusamy B."/>
            <person name="Yadav A.K."/>
            <person name="Shrivastava P."/>
            <person name="Marimuthu A."/>
            <person name="Anand S."/>
            <person name="Sundaram H."/>
            <person name="Kingsbury R."/>
            <person name="Harsha H.C."/>
            <person name="Nair B."/>
            <person name="Prasad T.S."/>
            <person name="Chauhan D.S."/>
            <person name="Katoch K."/>
            <person name="Katoch V.M."/>
            <person name="Kumar P."/>
            <person name="Chaerkady R."/>
            <person name="Ramachandran S."/>
            <person name="Dash D."/>
            <person name="Pandey A."/>
        </authorList>
    </citation>
    <scope>IDENTIFICATION BY MASS SPECTROMETRY [LARGE SCALE ANALYSIS]</scope>
    <source>
        <strain>ATCC 25618 / H37Rv</strain>
    </source>
</reference>
<feature type="chain" id="PRO_0000103796" description="Uncharacterized protein Rv1312">
    <location>
        <begin position="1"/>
        <end position="147"/>
    </location>
</feature>
<feature type="transmembrane region" description="Helical" evidence="1">
    <location>
        <begin position="3"/>
        <end position="23"/>
    </location>
</feature>
<evidence type="ECO:0000255" key="1"/>
<evidence type="ECO:0000305" key="2"/>
<gene>
    <name type="ordered locus">Rv1312</name>
    <name type="ORF">MTCY373.32</name>
</gene>
<dbReference type="EMBL" id="AL123456">
    <property type="protein sequence ID" value="CCP44069.1"/>
    <property type="molecule type" value="Genomic_DNA"/>
</dbReference>
<dbReference type="PIR" id="D70775">
    <property type="entry name" value="D70775"/>
</dbReference>
<dbReference type="RefSeq" id="NP_215828.1">
    <property type="nucleotide sequence ID" value="NC_000962.3"/>
</dbReference>
<dbReference type="RefSeq" id="WP_003406722.1">
    <property type="nucleotide sequence ID" value="NZ_NVQJ01000030.1"/>
</dbReference>
<dbReference type="SMR" id="P9WM29"/>
<dbReference type="STRING" id="83332.Rv1312"/>
<dbReference type="PaxDb" id="83332-Rv1312"/>
<dbReference type="GeneID" id="886930"/>
<dbReference type="KEGG" id="mtu:Rv1312"/>
<dbReference type="KEGG" id="mtv:RVBD_1312"/>
<dbReference type="TubercuList" id="Rv1312"/>
<dbReference type="eggNOG" id="ENOG50331I5">
    <property type="taxonomic scope" value="Bacteria"/>
</dbReference>
<dbReference type="InParanoid" id="P9WM29"/>
<dbReference type="OrthoDB" id="4793422at2"/>
<dbReference type="PhylomeDB" id="P9WM29"/>
<dbReference type="Proteomes" id="UP000001584">
    <property type="component" value="Chromosome"/>
</dbReference>
<dbReference type="GO" id="GO:0016020">
    <property type="term" value="C:membrane"/>
    <property type="evidence" value="ECO:0007669"/>
    <property type="project" value="UniProtKB-SubCell"/>
</dbReference>
<dbReference type="InterPro" id="IPR019675">
    <property type="entry name" value="DUF2550"/>
</dbReference>
<dbReference type="Pfam" id="PF10739">
    <property type="entry name" value="DUF2550"/>
    <property type="match status" value="1"/>
</dbReference>
<proteinExistence type="evidence at protein level"/>
<accession>P9WM29</accession>
<accession>L0T909</accession>
<accession>Q10620</accession>
<name>Y1312_MYCTU</name>
<protein>
    <recommendedName>
        <fullName>Uncharacterized protein Rv1312</fullName>
    </recommendedName>
</protein>
<comment type="subcellular location">
    <subcellularLocation>
        <location evidence="2">Membrane</location>
        <topology evidence="2">Single-pass membrane protein</topology>
    </subcellularLocation>
</comment>
<comment type="similarity">
    <text evidence="2">To M.leprae ML1147.</text>
</comment>
<keyword id="KW-0472">Membrane</keyword>
<keyword id="KW-1185">Reference proteome</keyword>
<keyword id="KW-0812">Transmembrane</keyword>
<keyword id="KW-1133">Transmembrane helix</keyword>
<organism>
    <name type="scientific">Mycobacterium tuberculosis (strain ATCC 25618 / H37Rv)</name>
    <dbReference type="NCBI Taxonomy" id="83332"/>
    <lineage>
        <taxon>Bacteria</taxon>
        <taxon>Bacillati</taxon>
        <taxon>Actinomycetota</taxon>
        <taxon>Actinomycetes</taxon>
        <taxon>Mycobacteriales</taxon>
        <taxon>Mycobacteriaceae</taxon>
        <taxon>Mycobacterium</taxon>
        <taxon>Mycobacterium tuberculosis complex</taxon>
    </lineage>
</organism>